<comment type="function">
    <text>May play an important role in maintaining the flux of carbon towards starch formation. May also be involved in a sugar-sensing pathway.</text>
</comment>
<comment type="catalytic activity">
    <reaction>
        <text>D-fructose + ATP = D-fructose 6-phosphate + ADP + H(+)</text>
        <dbReference type="Rhea" id="RHEA:16125"/>
        <dbReference type="ChEBI" id="CHEBI:15378"/>
        <dbReference type="ChEBI" id="CHEBI:30616"/>
        <dbReference type="ChEBI" id="CHEBI:37721"/>
        <dbReference type="ChEBI" id="CHEBI:61527"/>
        <dbReference type="ChEBI" id="CHEBI:456216"/>
        <dbReference type="EC" id="2.7.1.4"/>
    </reaction>
</comment>
<comment type="activity regulation">
    <text>Inhibited at high fructose.</text>
</comment>
<comment type="biophysicochemical properties">
    <kinetics>
        <KM evidence="1">0.109 mM for fructose</KM>
        <KM evidence="1">0.187 mM for ATP</KM>
        <KM evidence="1">0.222 mM for UTP</KM>
        <Vmax evidence="1">835.0 umol/min/mg enzyme</Vmax>
    </kinetics>
</comment>
<comment type="pathway">
    <text>Glycan biosynthesis; starch biosynthesis.</text>
</comment>
<comment type="tissue specificity">
    <text evidence="1">Expressed in roots, at higher levels in stems, and hardly detectable in leaves.</text>
</comment>
<comment type="developmental stage">
    <text evidence="1">High expression 7 days after pollination (DAP), gradually declines after 15 DAP and becomes undetectable by 29 DAP.</text>
</comment>
<comment type="similarity">
    <text evidence="2">Belongs to the carbohydrate kinase PfkB family.</text>
</comment>
<sequence length="335" mass="35482">MAPLGDGGAAAAAASNNLVVSFGEMLIDFVPDVAGLSLAESGGFVKAPGGAPANVACAIAKLGGSSAFVGKFGDDEFGHMLVNILKQNNVNAEGCLFDKHARTALAFVTLKHDGEREFMFYRNPSADMLLTEAELDLGLVRRARVFHYGSISLISEPCRSAHMAAMRAAKAAGVLCSYDPNVRLPLWPSPDAAREGILSIWKEADFIKVSDDEVAFLTRGDANDEKNVLSLWFDGLKLLVVTDGDKGCRYFTKDFKGSVPGFKVDTVDTTGAGDAFVGSLLVNVAKDDSIFHNEEKLREALKFSNACGAICTTKKGAIPALPTVATAQDLIAKAN</sequence>
<evidence type="ECO:0000269" key="1">
    <source ref="1"/>
</evidence>
<evidence type="ECO:0000305" key="2"/>
<organism>
    <name type="scientific">Zea mays</name>
    <name type="common">Maize</name>
    <dbReference type="NCBI Taxonomy" id="4577"/>
    <lineage>
        <taxon>Eukaryota</taxon>
        <taxon>Viridiplantae</taxon>
        <taxon>Streptophyta</taxon>
        <taxon>Embryophyta</taxon>
        <taxon>Tracheophyta</taxon>
        <taxon>Spermatophyta</taxon>
        <taxon>Magnoliopsida</taxon>
        <taxon>Liliopsida</taxon>
        <taxon>Poales</taxon>
        <taxon>Poaceae</taxon>
        <taxon>PACMAD clade</taxon>
        <taxon>Panicoideae</taxon>
        <taxon>Andropogonodae</taxon>
        <taxon>Andropogoneae</taxon>
        <taxon>Tripsacinae</taxon>
        <taxon>Zea</taxon>
    </lineage>
</organism>
<proteinExistence type="evidence at protein level"/>
<keyword id="KW-0067">ATP-binding</keyword>
<keyword id="KW-0119">Carbohydrate metabolism</keyword>
<keyword id="KW-0418">Kinase</keyword>
<keyword id="KW-0547">Nucleotide-binding</keyword>
<keyword id="KW-1185">Reference proteome</keyword>
<keyword id="KW-0808">Transferase</keyword>
<protein>
    <recommendedName>
        <fullName>Fructokinase-2</fullName>
        <ecNumber>2.7.1.4</ecNumber>
    </recommendedName>
    <alternativeName>
        <fullName>ZmFRK2</fullName>
    </alternativeName>
</protein>
<accession>Q6XZ78</accession>
<reference key="1">
    <citation type="journal article" date="2003" name="Plant Sci.">
        <title>Cloning and characterization of two fructokinases from maize.</title>
        <authorList>
            <person name="Zhang S."/>
            <person name="Nichols S.E."/>
            <person name="Dong J.G."/>
        </authorList>
    </citation>
    <scope>NUCLEOTIDE SEQUENCE [MRNA]</scope>
    <scope>BIOPHYSICOCHEMICAL PROPERTIES</scope>
    <scope>TISSUE SPECIFICITY</scope>
    <scope>DEVELOPMENTAL STAGE</scope>
</reference>
<gene>
    <name type="primary">FRK2</name>
</gene>
<dbReference type="EC" id="2.7.1.4"/>
<dbReference type="EMBL" id="AY197773">
    <property type="protein sequence ID" value="AAP42806.1"/>
    <property type="molecule type" value="mRNA"/>
</dbReference>
<dbReference type="RefSeq" id="NP_001105211.1">
    <property type="nucleotide sequence ID" value="NM_001111741.2"/>
</dbReference>
<dbReference type="SMR" id="Q6XZ78"/>
<dbReference type="FunCoup" id="Q6XZ78">
    <property type="interactions" value="312"/>
</dbReference>
<dbReference type="STRING" id="4577.Q6XZ78"/>
<dbReference type="PaxDb" id="4577-GRMZM2G051677_P02"/>
<dbReference type="EnsemblPlants" id="Zm00001eb260710_T001">
    <property type="protein sequence ID" value="Zm00001eb260710_P001"/>
    <property type="gene ID" value="Zm00001eb260710"/>
</dbReference>
<dbReference type="GeneID" id="542108"/>
<dbReference type="Gramene" id="Zm00001eb260710_T001">
    <property type="protein sequence ID" value="Zm00001eb260710_P001"/>
    <property type="gene ID" value="Zm00001eb260710"/>
</dbReference>
<dbReference type="KEGG" id="zma:542108"/>
<dbReference type="eggNOG" id="KOG2855">
    <property type="taxonomic scope" value="Eukaryota"/>
</dbReference>
<dbReference type="HOGENOM" id="CLU_027634_6_1_1"/>
<dbReference type="InParanoid" id="Q6XZ78"/>
<dbReference type="OMA" id="DDQHGRF"/>
<dbReference type="OrthoDB" id="415590at2759"/>
<dbReference type="BRENDA" id="2.7.1.4">
    <property type="organism ID" value="6752"/>
</dbReference>
<dbReference type="UniPathway" id="UPA00152"/>
<dbReference type="Proteomes" id="UP000007305">
    <property type="component" value="Chromosome 6"/>
</dbReference>
<dbReference type="ExpressionAtlas" id="Q6XZ78">
    <property type="expression patterns" value="baseline and differential"/>
</dbReference>
<dbReference type="GO" id="GO:0005829">
    <property type="term" value="C:cytosol"/>
    <property type="evidence" value="ECO:0000314"/>
    <property type="project" value="AgBase"/>
</dbReference>
<dbReference type="GO" id="GO:0005524">
    <property type="term" value="F:ATP binding"/>
    <property type="evidence" value="ECO:0007669"/>
    <property type="project" value="UniProtKB-KW"/>
</dbReference>
<dbReference type="GO" id="GO:0008865">
    <property type="term" value="F:fructokinase activity"/>
    <property type="evidence" value="ECO:0000314"/>
    <property type="project" value="AgBase"/>
</dbReference>
<dbReference type="GO" id="GO:0046835">
    <property type="term" value="P:carbohydrate phosphorylation"/>
    <property type="evidence" value="ECO:0000314"/>
    <property type="project" value="AgBase"/>
</dbReference>
<dbReference type="GO" id="GO:0006000">
    <property type="term" value="P:fructose metabolic process"/>
    <property type="evidence" value="ECO:0000318"/>
    <property type="project" value="GO_Central"/>
</dbReference>
<dbReference type="GO" id="GO:0019252">
    <property type="term" value="P:starch biosynthetic process"/>
    <property type="evidence" value="ECO:0007669"/>
    <property type="project" value="UniProtKB-UniPathway"/>
</dbReference>
<dbReference type="CDD" id="cd01167">
    <property type="entry name" value="bac_FRK"/>
    <property type="match status" value="1"/>
</dbReference>
<dbReference type="FunFam" id="3.40.1190.20:FF:000005">
    <property type="entry name" value="Probable fructokinase-2"/>
    <property type="match status" value="1"/>
</dbReference>
<dbReference type="Gene3D" id="3.40.1190.20">
    <property type="match status" value="1"/>
</dbReference>
<dbReference type="InterPro" id="IPR002173">
    <property type="entry name" value="Carboh/pur_kinase_PfkB_CS"/>
</dbReference>
<dbReference type="InterPro" id="IPR050306">
    <property type="entry name" value="PfkB_Carbo_kinase"/>
</dbReference>
<dbReference type="InterPro" id="IPR011611">
    <property type="entry name" value="PfkB_dom"/>
</dbReference>
<dbReference type="InterPro" id="IPR029056">
    <property type="entry name" value="Ribokinase-like"/>
</dbReference>
<dbReference type="PANTHER" id="PTHR43085:SF6">
    <property type="entry name" value="FRUCTOKINASE-5-RELATED"/>
    <property type="match status" value="1"/>
</dbReference>
<dbReference type="PANTHER" id="PTHR43085">
    <property type="entry name" value="HEXOKINASE FAMILY MEMBER"/>
    <property type="match status" value="1"/>
</dbReference>
<dbReference type="Pfam" id="PF00294">
    <property type="entry name" value="PfkB"/>
    <property type="match status" value="1"/>
</dbReference>
<dbReference type="SUPFAM" id="SSF53613">
    <property type="entry name" value="Ribokinase-like"/>
    <property type="match status" value="1"/>
</dbReference>
<dbReference type="PROSITE" id="PS00583">
    <property type="entry name" value="PFKB_KINASES_1"/>
    <property type="match status" value="1"/>
</dbReference>
<feature type="chain" id="PRO_0000234067" description="Fructokinase-2">
    <location>
        <begin position="1"/>
        <end position="335"/>
    </location>
</feature>
<name>SCRK2_MAIZE</name>